<evidence type="ECO:0000250" key="1"/>
<evidence type="ECO:0000255" key="2"/>
<evidence type="ECO:0000305" key="3"/>
<protein>
    <recommendedName>
        <fullName>DNA repair protein RecN</fullName>
    </recommendedName>
    <alternativeName>
        <fullName>Recombination protein N</fullName>
    </alternativeName>
</protein>
<name>RECN_XYLFT</name>
<dbReference type="EMBL" id="AE009442">
    <property type="protein sequence ID" value="AAO29220.1"/>
    <property type="molecule type" value="Genomic_DNA"/>
</dbReference>
<dbReference type="RefSeq" id="WP_004091046.1">
    <property type="nucleotide sequence ID" value="NC_004556.1"/>
</dbReference>
<dbReference type="SMR" id="Q87BS5"/>
<dbReference type="GeneID" id="93905190"/>
<dbReference type="KEGG" id="xft:PD_1373"/>
<dbReference type="HOGENOM" id="CLU_018297_3_1_6"/>
<dbReference type="Proteomes" id="UP000002516">
    <property type="component" value="Chromosome"/>
</dbReference>
<dbReference type="GO" id="GO:0043590">
    <property type="term" value="C:bacterial nucleoid"/>
    <property type="evidence" value="ECO:0007669"/>
    <property type="project" value="TreeGrafter"/>
</dbReference>
<dbReference type="GO" id="GO:0005524">
    <property type="term" value="F:ATP binding"/>
    <property type="evidence" value="ECO:0007669"/>
    <property type="project" value="UniProtKB-KW"/>
</dbReference>
<dbReference type="GO" id="GO:0016887">
    <property type="term" value="F:ATP hydrolysis activity"/>
    <property type="evidence" value="ECO:0007669"/>
    <property type="project" value="InterPro"/>
</dbReference>
<dbReference type="GO" id="GO:0006310">
    <property type="term" value="P:DNA recombination"/>
    <property type="evidence" value="ECO:0007669"/>
    <property type="project" value="InterPro"/>
</dbReference>
<dbReference type="GO" id="GO:0006302">
    <property type="term" value="P:double-strand break repair"/>
    <property type="evidence" value="ECO:0007669"/>
    <property type="project" value="InterPro"/>
</dbReference>
<dbReference type="GO" id="GO:0009432">
    <property type="term" value="P:SOS response"/>
    <property type="evidence" value="ECO:0007669"/>
    <property type="project" value="TreeGrafter"/>
</dbReference>
<dbReference type="CDD" id="cd03241">
    <property type="entry name" value="ABC_RecN"/>
    <property type="match status" value="2"/>
</dbReference>
<dbReference type="FunFam" id="3.40.50.300:FF:000319">
    <property type="entry name" value="DNA repair protein RecN"/>
    <property type="match status" value="1"/>
</dbReference>
<dbReference type="FunFam" id="3.40.50.300:FF:000356">
    <property type="entry name" value="DNA repair protein RecN"/>
    <property type="match status" value="1"/>
</dbReference>
<dbReference type="Gene3D" id="3.40.50.300">
    <property type="entry name" value="P-loop containing nucleotide triphosphate hydrolases"/>
    <property type="match status" value="2"/>
</dbReference>
<dbReference type="InterPro" id="IPR004604">
    <property type="entry name" value="DNA_recomb/repair_RecN"/>
</dbReference>
<dbReference type="InterPro" id="IPR027417">
    <property type="entry name" value="P-loop_NTPase"/>
</dbReference>
<dbReference type="InterPro" id="IPR038729">
    <property type="entry name" value="Rad50/SbcC_AAA"/>
</dbReference>
<dbReference type="InterPro" id="IPR003395">
    <property type="entry name" value="RecF/RecN/SMC_N"/>
</dbReference>
<dbReference type="NCBIfam" id="NF008121">
    <property type="entry name" value="PRK10869.1"/>
    <property type="match status" value="1"/>
</dbReference>
<dbReference type="NCBIfam" id="TIGR00634">
    <property type="entry name" value="recN"/>
    <property type="match status" value="1"/>
</dbReference>
<dbReference type="PANTHER" id="PTHR11059">
    <property type="entry name" value="DNA REPAIR PROTEIN RECN"/>
    <property type="match status" value="1"/>
</dbReference>
<dbReference type="PANTHER" id="PTHR11059:SF0">
    <property type="entry name" value="DNA REPAIR PROTEIN RECN"/>
    <property type="match status" value="1"/>
</dbReference>
<dbReference type="Pfam" id="PF13476">
    <property type="entry name" value="AAA_23"/>
    <property type="match status" value="1"/>
</dbReference>
<dbReference type="Pfam" id="PF02463">
    <property type="entry name" value="SMC_N"/>
    <property type="match status" value="1"/>
</dbReference>
<dbReference type="PIRSF" id="PIRSF003128">
    <property type="entry name" value="RecN"/>
    <property type="match status" value="1"/>
</dbReference>
<dbReference type="SUPFAM" id="SSF52540">
    <property type="entry name" value="P-loop containing nucleoside triphosphate hydrolases"/>
    <property type="match status" value="1"/>
</dbReference>
<reference key="1">
    <citation type="journal article" date="2003" name="J. Bacteriol.">
        <title>Comparative analyses of the complete genome sequences of Pierce's disease and citrus variegated chlorosis strains of Xylella fastidiosa.</title>
        <authorList>
            <person name="Van Sluys M.A."/>
            <person name="de Oliveira M.C."/>
            <person name="Monteiro-Vitorello C.B."/>
            <person name="Miyaki C.Y."/>
            <person name="Furlan L.R."/>
            <person name="Camargo L.E.A."/>
            <person name="da Silva A.C.R."/>
            <person name="Moon D.H."/>
            <person name="Takita M.A."/>
            <person name="Lemos E.G.M."/>
            <person name="Machado M.A."/>
            <person name="Ferro M.I.T."/>
            <person name="da Silva F.R."/>
            <person name="Goldman M.H.S."/>
            <person name="Goldman G.H."/>
            <person name="Lemos M.V.F."/>
            <person name="El-Dorry H."/>
            <person name="Tsai S.M."/>
            <person name="Carrer H."/>
            <person name="Carraro D.M."/>
            <person name="de Oliveira R.C."/>
            <person name="Nunes L.R."/>
            <person name="Siqueira W.J."/>
            <person name="Coutinho L.L."/>
            <person name="Kimura E.T."/>
            <person name="Ferro E.S."/>
            <person name="Harakava R."/>
            <person name="Kuramae E.E."/>
            <person name="Marino C.L."/>
            <person name="Giglioti E."/>
            <person name="Abreu I.L."/>
            <person name="Alves L.M.C."/>
            <person name="do Amaral A.M."/>
            <person name="Baia G.S."/>
            <person name="Blanco S.R."/>
            <person name="Brito M.S."/>
            <person name="Cannavan F.S."/>
            <person name="Celestino A.V."/>
            <person name="da Cunha A.F."/>
            <person name="Fenille R.C."/>
            <person name="Ferro J.A."/>
            <person name="Formighieri E.F."/>
            <person name="Kishi L.T."/>
            <person name="Leoni S.G."/>
            <person name="Oliveira A.R."/>
            <person name="Rosa V.E. Jr."/>
            <person name="Sassaki F.T."/>
            <person name="Sena J.A.D."/>
            <person name="de Souza A.A."/>
            <person name="Truffi D."/>
            <person name="Tsukumo F."/>
            <person name="Yanai G.M."/>
            <person name="Zaros L.G."/>
            <person name="Civerolo E.L."/>
            <person name="Simpson A.J.G."/>
            <person name="Almeida N.F. Jr."/>
            <person name="Setubal J.C."/>
            <person name="Kitajima J.P."/>
        </authorList>
    </citation>
    <scope>NUCLEOTIDE SEQUENCE [LARGE SCALE GENOMIC DNA]</scope>
    <source>
        <strain>Temecula1 / ATCC 700964</strain>
    </source>
</reference>
<accession>Q87BS5</accession>
<keyword id="KW-0067">ATP-binding</keyword>
<keyword id="KW-0227">DNA damage</keyword>
<keyword id="KW-0234">DNA repair</keyword>
<keyword id="KW-0547">Nucleotide-binding</keyword>
<keyword id="KW-1185">Reference proteome</keyword>
<proteinExistence type="inferred from homology"/>
<gene>
    <name type="primary">recN</name>
    <name type="ordered locus">PD_1373</name>
</gene>
<sequence length="557" mass="61471">MLRHLTIKDFAVVRNIELEFGPGMTVVSGETGAGKSLIIDALGFLSGLRADSSVVRHGAERAELSAEFDITIHHHARVWLRNVELDDGDQCQLRRIIRADGGSRAWINARPVTLSQLSDLATHLVEIHGQHEHQTLLSRQSQLVLLDTYAQNETERDAVQQAATHWQALLDERDALQAQGDMSERINFIEHQLTELQRENLDPATITALDASHRRQAHTAALIEACKNTTQTLHGDDTTSALHLLHAARHTLSRVNEHDARLGEVETLLDNAMIQVDEALTLLDRIHNDLNIDPEQLEAIELRIGRLHSLARKHRCTPLDLAAQRDRMAAEVESMRNMDIHLQQLDHRISNAMTKWRQAAEKLSISRTRAAAALSTTTTNLINELGMGGGQLLIQLQPHENNRPHPNGAERTEFLIATNPGQPPRPLRKIASGGELSRVSLAIMVAALGLDTVPTMVFDEVDTGIGGAIADIVGQKLRALGEQHQVLCVTHLPQVAAKGHTHYRVSKIPIDGITQSAICLLDSQARQEEIARMLGGVHISKEAHAAAGKLLQELQEM</sequence>
<comment type="function">
    <text evidence="1">May be involved in recombinational repair of damaged DNA.</text>
</comment>
<comment type="similarity">
    <text evidence="3">Belongs to the RecN family.</text>
</comment>
<organism>
    <name type="scientific">Xylella fastidiosa (strain Temecula1 / ATCC 700964)</name>
    <dbReference type="NCBI Taxonomy" id="183190"/>
    <lineage>
        <taxon>Bacteria</taxon>
        <taxon>Pseudomonadati</taxon>
        <taxon>Pseudomonadota</taxon>
        <taxon>Gammaproteobacteria</taxon>
        <taxon>Lysobacterales</taxon>
        <taxon>Lysobacteraceae</taxon>
        <taxon>Xylella</taxon>
    </lineage>
</organism>
<feature type="chain" id="PRO_0000188031" description="DNA repair protein RecN">
    <location>
        <begin position="1"/>
        <end position="557"/>
    </location>
</feature>
<feature type="binding site" evidence="2">
    <location>
        <begin position="29"/>
        <end position="36"/>
    </location>
    <ligand>
        <name>ATP</name>
        <dbReference type="ChEBI" id="CHEBI:30616"/>
    </ligand>
</feature>